<name>TSGA_SALPK</name>
<evidence type="ECO:0000255" key="1">
    <source>
        <dbReference type="HAMAP-Rule" id="MF_01044"/>
    </source>
</evidence>
<dbReference type="EMBL" id="FM200053">
    <property type="protein sequence ID" value="CAR61369.1"/>
    <property type="molecule type" value="Genomic_DNA"/>
</dbReference>
<dbReference type="RefSeq" id="WP_000185219.1">
    <property type="nucleotide sequence ID" value="NC_011147.1"/>
</dbReference>
<dbReference type="SMR" id="B5BH18"/>
<dbReference type="KEGG" id="sek:SSPA3117"/>
<dbReference type="HOGENOM" id="CLU_056916_0_0_6"/>
<dbReference type="Proteomes" id="UP000001869">
    <property type="component" value="Chromosome"/>
</dbReference>
<dbReference type="GO" id="GO:0005886">
    <property type="term" value="C:plasma membrane"/>
    <property type="evidence" value="ECO:0007669"/>
    <property type="project" value="UniProtKB-SubCell"/>
</dbReference>
<dbReference type="GO" id="GO:0022857">
    <property type="term" value="F:transmembrane transporter activity"/>
    <property type="evidence" value="ECO:0007669"/>
    <property type="project" value="InterPro"/>
</dbReference>
<dbReference type="FunFam" id="1.20.1250.20:FF:000032">
    <property type="entry name" value="Protein TsgA"/>
    <property type="match status" value="1"/>
</dbReference>
<dbReference type="FunFam" id="1.20.1250.20:FF:000052">
    <property type="entry name" value="Protein TsgA"/>
    <property type="match status" value="1"/>
</dbReference>
<dbReference type="Gene3D" id="1.20.1250.20">
    <property type="entry name" value="MFS general substrate transporter like domains"/>
    <property type="match status" value="2"/>
</dbReference>
<dbReference type="HAMAP" id="MF_01044">
    <property type="entry name" value="MFS_TsgA"/>
    <property type="match status" value="1"/>
</dbReference>
<dbReference type="InterPro" id="IPR011701">
    <property type="entry name" value="MFS"/>
</dbReference>
<dbReference type="InterPro" id="IPR020846">
    <property type="entry name" value="MFS_dom"/>
</dbReference>
<dbReference type="InterPro" id="IPR036259">
    <property type="entry name" value="MFS_trans_sf"/>
</dbReference>
<dbReference type="InterPro" id="IPR023528">
    <property type="entry name" value="MFS_TsgA"/>
</dbReference>
<dbReference type="InterPro" id="IPR050375">
    <property type="entry name" value="MFS_TsgA-like"/>
</dbReference>
<dbReference type="NCBIfam" id="NF002982">
    <property type="entry name" value="PRK03699.1"/>
    <property type="match status" value="1"/>
</dbReference>
<dbReference type="PANTHER" id="PTHR43702">
    <property type="entry name" value="L-FUCOSE-PROTON SYMPORTER"/>
    <property type="match status" value="1"/>
</dbReference>
<dbReference type="PANTHER" id="PTHR43702:SF3">
    <property type="entry name" value="PROTEIN TSGA"/>
    <property type="match status" value="1"/>
</dbReference>
<dbReference type="Pfam" id="PF07690">
    <property type="entry name" value="MFS_1"/>
    <property type="match status" value="1"/>
</dbReference>
<dbReference type="SUPFAM" id="SSF103473">
    <property type="entry name" value="MFS general substrate transporter"/>
    <property type="match status" value="1"/>
</dbReference>
<dbReference type="PROSITE" id="PS50850">
    <property type="entry name" value="MFS"/>
    <property type="match status" value="1"/>
</dbReference>
<sequence>MTNSNRIKLTWISFLSYALTGALVIVTGMVMGNIADYFHLPVSSMSNTFTFLNAGILISIFLNAWLMEIVPLKTQLRFGFILMVLAVAGLMFSHSLALFSAAMFVLGLVSGITMSIGTFLITQLYEGRQRGSRLLFTDSFFSMAGMIFPMVAAFLLARSIEWYWVYACIGLVYLAIFILTFGCEFPALGKHAQHSQAPVVKEKWGIGVLFLAVAALCYILGQLGFISWVPEYAKGLGMSLNDAGALVSDFWMSYMFGMWAFSFILRFFDLQRILTVLAGMAAVLMYLFITGTQAHMPWFILTLGFFSSAIYTSIITLGSQQTKVASPKLVNFILTCGTIGTMLTFVVTGPIVAHSGPQAALLTANGLYAVVFVMCFALGFVSRHRQHSSPAAH</sequence>
<accession>B5BH18</accession>
<feature type="chain" id="PRO_1000136151" description="Protein TsgA">
    <location>
        <begin position="1"/>
        <end position="393"/>
    </location>
</feature>
<feature type="transmembrane region" description="Helical" evidence="1">
    <location>
        <begin position="11"/>
        <end position="31"/>
    </location>
</feature>
<feature type="transmembrane region" description="Helical" evidence="1">
    <location>
        <begin position="51"/>
        <end position="71"/>
    </location>
</feature>
<feature type="transmembrane region" description="Helical" evidence="1">
    <location>
        <begin position="78"/>
        <end position="98"/>
    </location>
</feature>
<feature type="transmembrane region" description="Helical" evidence="1">
    <location>
        <begin position="101"/>
        <end position="121"/>
    </location>
</feature>
<feature type="transmembrane region" description="Helical" evidence="1">
    <location>
        <begin position="134"/>
        <end position="154"/>
    </location>
</feature>
<feature type="transmembrane region" description="Helical" evidence="1">
    <location>
        <begin position="162"/>
        <end position="182"/>
    </location>
</feature>
<feature type="transmembrane region" description="Helical" evidence="1">
    <location>
        <begin position="206"/>
        <end position="226"/>
    </location>
</feature>
<feature type="transmembrane region" description="Helical" evidence="1">
    <location>
        <begin position="245"/>
        <end position="265"/>
    </location>
</feature>
<feature type="transmembrane region" description="Helical" evidence="1">
    <location>
        <begin position="273"/>
        <end position="293"/>
    </location>
</feature>
<feature type="transmembrane region" description="Helical" evidence="1">
    <location>
        <begin position="298"/>
        <end position="318"/>
    </location>
</feature>
<feature type="transmembrane region" description="Helical" evidence="1">
    <location>
        <begin position="332"/>
        <end position="352"/>
    </location>
</feature>
<feature type="transmembrane region" description="Helical" evidence="1">
    <location>
        <begin position="361"/>
        <end position="381"/>
    </location>
</feature>
<protein>
    <recommendedName>
        <fullName evidence="1">Protein TsgA</fullName>
    </recommendedName>
</protein>
<keyword id="KW-0997">Cell inner membrane</keyword>
<keyword id="KW-1003">Cell membrane</keyword>
<keyword id="KW-0472">Membrane</keyword>
<keyword id="KW-0812">Transmembrane</keyword>
<keyword id="KW-1133">Transmembrane helix</keyword>
<reference key="1">
    <citation type="journal article" date="2009" name="BMC Genomics">
        <title>Pseudogene accumulation in the evolutionary histories of Salmonella enterica serovars Paratyphi A and Typhi.</title>
        <authorList>
            <person name="Holt K.E."/>
            <person name="Thomson N.R."/>
            <person name="Wain J."/>
            <person name="Langridge G.C."/>
            <person name="Hasan R."/>
            <person name="Bhutta Z.A."/>
            <person name="Quail M.A."/>
            <person name="Norbertczak H."/>
            <person name="Walker D."/>
            <person name="Simmonds M."/>
            <person name="White B."/>
            <person name="Bason N."/>
            <person name="Mungall K."/>
            <person name="Dougan G."/>
            <person name="Parkhill J."/>
        </authorList>
    </citation>
    <scope>NUCLEOTIDE SEQUENCE [LARGE SCALE GENOMIC DNA]</scope>
    <source>
        <strain>AKU_12601</strain>
    </source>
</reference>
<organism>
    <name type="scientific">Salmonella paratyphi A (strain AKU_12601)</name>
    <dbReference type="NCBI Taxonomy" id="554290"/>
    <lineage>
        <taxon>Bacteria</taxon>
        <taxon>Pseudomonadati</taxon>
        <taxon>Pseudomonadota</taxon>
        <taxon>Gammaproteobacteria</taxon>
        <taxon>Enterobacterales</taxon>
        <taxon>Enterobacteriaceae</taxon>
        <taxon>Salmonella</taxon>
    </lineage>
</organism>
<comment type="subcellular location">
    <subcellularLocation>
        <location evidence="1">Cell inner membrane</location>
        <topology evidence="1">Multi-pass membrane protein</topology>
    </subcellularLocation>
</comment>
<comment type="similarity">
    <text evidence="1">Belongs to the major facilitator superfamily. TsgA family.</text>
</comment>
<gene>
    <name evidence="1" type="primary">tsgA</name>
    <name type="ordered locus">SSPA3117</name>
</gene>
<proteinExistence type="inferred from homology"/>